<organism>
    <name type="scientific">Herminiimonas arsenicoxydans</name>
    <dbReference type="NCBI Taxonomy" id="204773"/>
    <lineage>
        <taxon>Bacteria</taxon>
        <taxon>Pseudomonadati</taxon>
        <taxon>Pseudomonadota</taxon>
        <taxon>Betaproteobacteria</taxon>
        <taxon>Burkholderiales</taxon>
        <taxon>Oxalobacteraceae</taxon>
        <taxon>Herminiimonas</taxon>
    </lineage>
</organism>
<gene>
    <name evidence="1" type="primary">proB</name>
    <name type="ordered locus">HEAR2784</name>
</gene>
<sequence length="372" mass="39792">MDSAIQSAKRIIIKVGSSLVTNDGKGLDTAAIQKWAEQIVQLRALGKEVVLVSSGAIAEGMQRLGFDKRPTGVHELQACAAVGQMGLAQIYETSFRQHQVQTAQILLTHADLADRERYLNARSTLFTLLQLGVVPIINENDTVVTDEIKFGDNDTLGALVANLIEADALIILTDQRGLFSADPRKDPHATFIHEAQAGDVELEAMAGGAGSSLGRGGMLTKILAAKRAALSGAHTVIAWGREEQVLTRLAAGEAIGTQLTAQTAQLTARKQWMADHLHTAGRIVLDQGAVLKLTAEGKSLLPIGVIEVSGSFGRGDVITCVDQSGRAIARGITNYTSSEARRIMRKPSTDILSILGFVEEPELIHRDNLVLL</sequence>
<feature type="chain" id="PRO_1000081066" description="Glutamate 5-kinase">
    <location>
        <begin position="1"/>
        <end position="372"/>
    </location>
</feature>
<feature type="domain" description="PUA" evidence="1">
    <location>
        <begin position="280"/>
        <end position="358"/>
    </location>
</feature>
<feature type="binding site" evidence="1">
    <location>
        <position position="14"/>
    </location>
    <ligand>
        <name>ATP</name>
        <dbReference type="ChEBI" id="CHEBI:30616"/>
    </ligand>
</feature>
<feature type="binding site" evidence="1">
    <location>
        <position position="54"/>
    </location>
    <ligand>
        <name>substrate</name>
    </ligand>
</feature>
<feature type="binding site" evidence="1">
    <location>
        <position position="141"/>
    </location>
    <ligand>
        <name>substrate</name>
    </ligand>
</feature>
<feature type="binding site" evidence="1">
    <location>
        <position position="153"/>
    </location>
    <ligand>
        <name>substrate</name>
    </ligand>
</feature>
<feature type="binding site" evidence="1">
    <location>
        <begin position="173"/>
        <end position="174"/>
    </location>
    <ligand>
        <name>ATP</name>
        <dbReference type="ChEBI" id="CHEBI:30616"/>
    </ligand>
</feature>
<accession>A4G8R3</accession>
<proteinExistence type="inferred from homology"/>
<name>PROB_HERAR</name>
<evidence type="ECO:0000255" key="1">
    <source>
        <dbReference type="HAMAP-Rule" id="MF_00456"/>
    </source>
</evidence>
<keyword id="KW-0028">Amino-acid biosynthesis</keyword>
<keyword id="KW-0067">ATP-binding</keyword>
<keyword id="KW-0963">Cytoplasm</keyword>
<keyword id="KW-0418">Kinase</keyword>
<keyword id="KW-0547">Nucleotide-binding</keyword>
<keyword id="KW-0641">Proline biosynthesis</keyword>
<keyword id="KW-1185">Reference proteome</keyword>
<keyword id="KW-0808">Transferase</keyword>
<comment type="function">
    <text evidence="1">Catalyzes the transfer of a phosphate group to glutamate to form L-glutamate 5-phosphate.</text>
</comment>
<comment type="catalytic activity">
    <reaction evidence="1">
        <text>L-glutamate + ATP = L-glutamyl 5-phosphate + ADP</text>
        <dbReference type="Rhea" id="RHEA:14877"/>
        <dbReference type="ChEBI" id="CHEBI:29985"/>
        <dbReference type="ChEBI" id="CHEBI:30616"/>
        <dbReference type="ChEBI" id="CHEBI:58274"/>
        <dbReference type="ChEBI" id="CHEBI:456216"/>
        <dbReference type="EC" id="2.7.2.11"/>
    </reaction>
</comment>
<comment type="pathway">
    <text evidence="1">Amino-acid biosynthesis; L-proline biosynthesis; L-glutamate 5-semialdehyde from L-glutamate: step 1/2.</text>
</comment>
<comment type="subcellular location">
    <subcellularLocation>
        <location evidence="1">Cytoplasm</location>
    </subcellularLocation>
</comment>
<comment type="similarity">
    <text evidence="1">Belongs to the glutamate 5-kinase family.</text>
</comment>
<dbReference type="EC" id="2.7.2.11" evidence="1"/>
<dbReference type="EMBL" id="CU207211">
    <property type="protein sequence ID" value="CAL62900.1"/>
    <property type="molecule type" value="Genomic_DNA"/>
</dbReference>
<dbReference type="SMR" id="A4G8R3"/>
<dbReference type="STRING" id="204773.HEAR2784"/>
<dbReference type="KEGG" id="har:HEAR2784"/>
<dbReference type="eggNOG" id="COG0263">
    <property type="taxonomic scope" value="Bacteria"/>
</dbReference>
<dbReference type="HOGENOM" id="CLU_025400_2_0_4"/>
<dbReference type="OrthoDB" id="9804434at2"/>
<dbReference type="UniPathway" id="UPA00098">
    <property type="reaction ID" value="UER00359"/>
</dbReference>
<dbReference type="Proteomes" id="UP000006697">
    <property type="component" value="Chromosome"/>
</dbReference>
<dbReference type="GO" id="GO:0005829">
    <property type="term" value="C:cytosol"/>
    <property type="evidence" value="ECO:0007669"/>
    <property type="project" value="TreeGrafter"/>
</dbReference>
<dbReference type="GO" id="GO:0005524">
    <property type="term" value="F:ATP binding"/>
    <property type="evidence" value="ECO:0007669"/>
    <property type="project" value="UniProtKB-KW"/>
</dbReference>
<dbReference type="GO" id="GO:0004349">
    <property type="term" value="F:glutamate 5-kinase activity"/>
    <property type="evidence" value="ECO:0007669"/>
    <property type="project" value="UniProtKB-UniRule"/>
</dbReference>
<dbReference type="GO" id="GO:0003723">
    <property type="term" value="F:RNA binding"/>
    <property type="evidence" value="ECO:0007669"/>
    <property type="project" value="InterPro"/>
</dbReference>
<dbReference type="GO" id="GO:0055129">
    <property type="term" value="P:L-proline biosynthetic process"/>
    <property type="evidence" value="ECO:0007669"/>
    <property type="project" value="UniProtKB-UniRule"/>
</dbReference>
<dbReference type="CDD" id="cd04242">
    <property type="entry name" value="AAK_G5K_ProB"/>
    <property type="match status" value="1"/>
</dbReference>
<dbReference type="CDD" id="cd21157">
    <property type="entry name" value="PUA_G5K"/>
    <property type="match status" value="1"/>
</dbReference>
<dbReference type="FunFam" id="2.30.130.10:FF:000007">
    <property type="entry name" value="Glutamate 5-kinase"/>
    <property type="match status" value="1"/>
</dbReference>
<dbReference type="FunFam" id="3.40.1160.10:FF:000018">
    <property type="entry name" value="Glutamate 5-kinase"/>
    <property type="match status" value="1"/>
</dbReference>
<dbReference type="Gene3D" id="3.40.1160.10">
    <property type="entry name" value="Acetylglutamate kinase-like"/>
    <property type="match status" value="2"/>
</dbReference>
<dbReference type="Gene3D" id="2.30.130.10">
    <property type="entry name" value="PUA domain"/>
    <property type="match status" value="1"/>
</dbReference>
<dbReference type="HAMAP" id="MF_00456">
    <property type="entry name" value="ProB"/>
    <property type="match status" value="1"/>
</dbReference>
<dbReference type="InterPro" id="IPR036393">
    <property type="entry name" value="AceGlu_kinase-like_sf"/>
</dbReference>
<dbReference type="InterPro" id="IPR001048">
    <property type="entry name" value="Asp/Glu/Uridylate_kinase"/>
</dbReference>
<dbReference type="InterPro" id="IPR041739">
    <property type="entry name" value="G5K_ProB"/>
</dbReference>
<dbReference type="InterPro" id="IPR001057">
    <property type="entry name" value="Glu/AcGlu_kinase"/>
</dbReference>
<dbReference type="InterPro" id="IPR011529">
    <property type="entry name" value="Glu_5kinase"/>
</dbReference>
<dbReference type="InterPro" id="IPR005715">
    <property type="entry name" value="Glu_5kinase/COase_Synthase"/>
</dbReference>
<dbReference type="InterPro" id="IPR019797">
    <property type="entry name" value="Glutamate_5-kinase_CS"/>
</dbReference>
<dbReference type="InterPro" id="IPR002478">
    <property type="entry name" value="PUA"/>
</dbReference>
<dbReference type="InterPro" id="IPR015947">
    <property type="entry name" value="PUA-like_sf"/>
</dbReference>
<dbReference type="InterPro" id="IPR036974">
    <property type="entry name" value="PUA_sf"/>
</dbReference>
<dbReference type="NCBIfam" id="TIGR01027">
    <property type="entry name" value="proB"/>
    <property type="match status" value="1"/>
</dbReference>
<dbReference type="PANTHER" id="PTHR43654">
    <property type="entry name" value="GLUTAMATE 5-KINASE"/>
    <property type="match status" value="1"/>
</dbReference>
<dbReference type="PANTHER" id="PTHR43654:SF1">
    <property type="entry name" value="ISOPENTENYL PHOSPHATE KINASE"/>
    <property type="match status" value="1"/>
</dbReference>
<dbReference type="Pfam" id="PF00696">
    <property type="entry name" value="AA_kinase"/>
    <property type="match status" value="1"/>
</dbReference>
<dbReference type="Pfam" id="PF01472">
    <property type="entry name" value="PUA"/>
    <property type="match status" value="1"/>
</dbReference>
<dbReference type="PIRSF" id="PIRSF000729">
    <property type="entry name" value="GK"/>
    <property type="match status" value="1"/>
</dbReference>
<dbReference type="PRINTS" id="PR00474">
    <property type="entry name" value="GLU5KINASE"/>
</dbReference>
<dbReference type="SMART" id="SM00359">
    <property type="entry name" value="PUA"/>
    <property type="match status" value="1"/>
</dbReference>
<dbReference type="SUPFAM" id="SSF53633">
    <property type="entry name" value="Carbamate kinase-like"/>
    <property type="match status" value="1"/>
</dbReference>
<dbReference type="SUPFAM" id="SSF88697">
    <property type="entry name" value="PUA domain-like"/>
    <property type="match status" value="1"/>
</dbReference>
<dbReference type="PROSITE" id="PS00902">
    <property type="entry name" value="GLUTAMATE_5_KINASE"/>
    <property type="match status" value="1"/>
</dbReference>
<dbReference type="PROSITE" id="PS50890">
    <property type="entry name" value="PUA"/>
    <property type="match status" value="1"/>
</dbReference>
<reference key="1">
    <citation type="journal article" date="2007" name="PLoS Genet.">
        <title>A tale of two oxidation states: bacterial colonization of arsenic-rich environments.</title>
        <authorList>
            <person name="Muller D."/>
            <person name="Medigue C."/>
            <person name="Koechler S."/>
            <person name="Barbe V."/>
            <person name="Barakat M."/>
            <person name="Talla E."/>
            <person name="Bonnefoy V."/>
            <person name="Krin E."/>
            <person name="Arsene-Ploetze F."/>
            <person name="Carapito C."/>
            <person name="Chandler M."/>
            <person name="Cournoyer B."/>
            <person name="Cruveiller S."/>
            <person name="Dossat C."/>
            <person name="Duval S."/>
            <person name="Heymann M."/>
            <person name="Leize E."/>
            <person name="Lieutaud A."/>
            <person name="Lievremont D."/>
            <person name="Makita Y."/>
            <person name="Mangenot S."/>
            <person name="Nitschke W."/>
            <person name="Ortet P."/>
            <person name="Perdrial N."/>
            <person name="Schoepp B."/>
            <person name="Siguier P."/>
            <person name="Simeonova D.D."/>
            <person name="Rouy Z."/>
            <person name="Segurens B."/>
            <person name="Turlin E."/>
            <person name="Vallenet D."/>
            <person name="van Dorsselaer A."/>
            <person name="Weiss S."/>
            <person name="Weissenbach J."/>
            <person name="Lett M.-C."/>
            <person name="Danchin A."/>
            <person name="Bertin P.N."/>
        </authorList>
    </citation>
    <scope>NUCLEOTIDE SEQUENCE [LARGE SCALE GENOMIC DNA]</scope>
    <source>
        <strain>ULPAs1</strain>
    </source>
</reference>
<protein>
    <recommendedName>
        <fullName evidence="1">Glutamate 5-kinase</fullName>
        <ecNumber evidence="1">2.7.2.11</ecNumber>
    </recommendedName>
    <alternativeName>
        <fullName evidence="1">Gamma-glutamyl kinase</fullName>
        <shortName evidence="1">GK</shortName>
    </alternativeName>
</protein>